<reference key="1">
    <citation type="journal article" date="1995" name="J. Mol. Biol.">
        <title>Complete sequence of the maize chloroplast genome: gene content, hotspots of divergence and fine tuning of genetic information by transcript editing.</title>
        <authorList>
            <person name="Maier R.M."/>
            <person name="Neckermann K."/>
            <person name="Igloi G.L."/>
            <person name="Koessel H."/>
        </authorList>
    </citation>
    <scope>NUCLEOTIDE SEQUENCE [LARGE SCALE GENOMIC DNA]</scope>
    <source>
        <strain>cv. B73</strain>
    </source>
</reference>
<reference key="2">
    <citation type="submission" date="2002-12" db="EMBL/GenBank/DDBJ databases">
        <title>Cloning of ORF 49 and rps 15 sequences from tropical Indian maize chloroplast genome.</title>
        <authorList>
            <person name="Baghban Kohneh Rouz B."/>
            <person name="Bansal K.C."/>
        </authorList>
    </citation>
    <scope>NUCLEOTIDE SEQUENCE [GENOMIC DNA]</scope>
    <source>
        <strain>cv. CM111</strain>
        <tissue>Leaf</tissue>
    </source>
</reference>
<feature type="chain" id="PRO_0000360999" description="Uncharacterized 2.5 kDa protein in tRNA-Arg-tRNA-Asn intergenic region">
    <location>
        <begin position="1"/>
        <end position="23"/>
    </location>
</feature>
<keyword id="KW-0150">Chloroplast</keyword>
<keyword id="KW-0934">Plastid</keyword>
<keyword id="KW-1185">Reference proteome</keyword>
<accession>Q37069</accession>
<accession>O03582</accession>
<accession>O03585</accession>
<dbReference type="EMBL" id="X86563">
    <property type="protein sequence ID" value="CAA60343.1"/>
    <property type="molecule type" value="Genomic_DNA"/>
</dbReference>
<dbReference type="EMBL" id="X86563">
    <property type="protein sequence ID" value="CAA60357.1"/>
    <property type="molecule type" value="Genomic_DNA"/>
</dbReference>
<dbReference type="EMBL" id="AJ535776">
    <property type="protein sequence ID" value="CAD59761.1"/>
    <property type="molecule type" value="Genomic_DNA"/>
</dbReference>
<dbReference type="PIR" id="JQ0281">
    <property type="entry name" value="JQ0281"/>
</dbReference>
<dbReference type="PIR" id="S58624">
    <property type="entry name" value="S58624"/>
</dbReference>
<dbReference type="RefSeq" id="NP_043081.1">
    <property type="nucleotide sequence ID" value="NC_001666.2"/>
</dbReference>
<dbReference type="RefSeq" id="NP_043096.1">
    <property type="nucleotide sequence ID" value="NC_001666.2"/>
</dbReference>
<dbReference type="STRING" id="4577.Q37069"/>
<dbReference type="GeneID" id="1466376"/>
<dbReference type="GeneID" id="1466381"/>
<dbReference type="KEGG" id="zma:1466376"/>
<dbReference type="KEGG" id="zma:1466381"/>
<dbReference type="InParanoid" id="Q37069"/>
<dbReference type="Proteomes" id="UP000007305">
    <property type="component" value="Chloroplast"/>
</dbReference>
<dbReference type="GO" id="GO:0009507">
    <property type="term" value="C:chloroplast"/>
    <property type="evidence" value="ECO:0007669"/>
    <property type="project" value="UniProtKB-SubCell"/>
</dbReference>
<organism>
    <name type="scientific">Zea mays</name>
    <name type="common">Maize</name>
    <dbReference type="NCBI Taxonomy" id="4577"/>
    <lineage>
        <taxon>Eukaryota</taxon>
        <taxon>Viridiplantae</taxon>
        <taxon>Streptophyta</taxon>
        <taxon>Embryophyta</taxon>
        <taxon>Tracheophyta</taxon>
        <taxon>Spermatophyta</taxon>
        <taxon>Magnoliopsida</taxon>
        <taxon>Liliopsida</taxon>
        <taxon>Poales</taxon>
        <taxon>Poaceae</taxon>
        <taxon>PACMAD clade</taxon>
        <taxon>Panicoideae</taxon>
        <taxon>Andropogonodae</taxon>
        <taxon>Andropogoneae</taxon>
        <taxon>Tripsacinae</taxon>
        <taxon>Zea</taxon>
    </lineage>
</organism>
<sequence>MIGIADVKLLNLGMLFPFVEVES</sequence>
<name>YCX1_MAIZE</name>
<geneLocation type="chloroplast"/>
<proteinExistence type="predicted"/>
<protein>
    <recommendedName>
        <fullName>Uncharacterized 2.5 kDa protein in tRNA-Arg-tRNA-Asn intergenic region</fullName>
    </recommendedName>
    <alternativeName>
        <fullName>ORF23</fullName>
    </alternativeName>
</protein>
<comment type="subcellular location">
    <subcellularLocation>
        <location>Plastid</location>
        <location>Chloroplast</location>
    </subcellularLocation>
</comment>